<protein>
    <recommendedName>
        <fullName evidence="1">Phosphoserine aminotransferase</fullName>
        <ecNumber evidence="1">2.6.1.52</ecNumber>
    </recommendedName>
    <alternativeName>
        <fullName evidence="1">Phosphohydroxythreonine aminotransferase</fullName>
        <shortName evidence="1">PSAT</shortName>
    </alternativeName>
</protein>
<sequence length="361" mass="39967">MSQLFNFSAGPAMLPVDVLKQAQEELLNWNGQGVSVMEISHRDPVYVHMAREAEQDLRDLLNVPDDYEVLFLQGGGRGQFSAVPQNIASPDATVDYLDTGIWSGFAIREAEKFVSKVNVAGQVQEGAKGKEIQSPENWKLSENAAYFHYCPNETVDGIALHEIPDVKAPIVADMSSNILSEPLDVSKFGVIYAGAQKNIGPSGFAIAIVKKSLLGHPQKQVSSIMDYQLQAKDGSMYNTPNTFAWYLAGLVFKWLKAQGGLTAMGERNRHKAQLLYDFVDKSDFYRNDINPAYRSIMNIPFQLAYDKLDAEFLQGAKNQGLLGLKGHRFVGGMRASIYNAMPVEGVEALLNYMADFERKLG</sequence>
<keyword id="KW-0028">Amino-acid biosynthesis</keyword>
<keyword id="KW-0032">Aminotransferase</keyword>
<keyword id="KW-0963">Cytoplasm</keyword>
<keyword id="KW-0663">Pyridoxal phosphate</keyword>
<keyword id="KW-0664">Pyridoxine biosynthesis</keyword>
<keyword id="KW-1185">Reference proteome</keyword>
<keyword id="KW-0718">Serine biosynthesis</keyword>
<keyword id="KW-0808">Transferase</keyword>
<evidence type="ECO:0000255" key="1">
    <source>
        <dbReference type="HAMAP-Rule" id="MF_00160"/>
    </source>
</evidence>
<reference key="1">
    <citation type="journal article" date="2004" name="Proc. Natl. Acad. Sci. U.S.A.">
        <title>Genome sequence of the deep-sea gamma-proteobacterium Idiomarina loihiensis reveals amino acid fermentation as a source of carbon and energy.</title>
        <authorList>
            <person name="Hou S."/>
            <person name="Saw J.H."/>
            <person name="Lee K.S."/>
            <person name="Freitas T.A."/>
            <person name="Belisle C."/>
            <person name="Kawarabayasi Y."/>
            <person name="Donachie S.P."/>
            <person name="Pikina A."/>
            <person name="Galperin M.Y."/>
            <person name="Koonin E.V."/>
            <person name="Makarova K.S."/>
            <person name="Omelchenko M.V."/>
            <person name="Sorokin A."/>
            <person name="Wolf Y.I."/>
            <person name="Li Q.X."/>
            <person name="Keum Y.S."/>
            <person name="Campbell S."/>
            <person name="Denery J."/>
            <person name="Aizawa S."/>
            <person name="Shibata S."/>
            <person name="Malahoff A."/>
            <person name="Alam M."/>
        </authorList>
    </citation>
    <scope>NUCLEOTIDE SEQUENCE [LARGE SCALE GENOMIC DNA]</scope>
    <source>
        <strain>ATCC BAA-735 / DSM 15497 / L2-TR</strain>
    </source>
</reference>
<organism>
    <name type="scientific">Idiomarina loihiensis (strain ATCC BAA-735 / DSM 15497 / L2-TR)</name>
    <dbReference type="NCBI Taxonomy" id="283942"/>
    <lineage>
        <taxon>Bacteria</taxon>
        <taxon>Pseudomonadati</taxon>
        <taxon>Pseudomonadota</taxon>
        <taxon>Gammaproteobacteria</taxon>
        <taxon>Alteromonadales</taxon>
        <taxon>Idiomarinaceae</taxon>
        <taxon>Idiomarina</taxon>
    </lineage>
</organism>
<comment type="function">
    <text evidence="1">Catalyzes the reversible conversion of 3-phosphohydroxypyruvate to phosphoserine and of 3-hydroxy-2-oxo-4-phosphonooxybutanoate to phosphohydroxythreonine.</text>
</comment>
<comment type="catalytic activity">
    <reaction evidence="1">
        <text>O-phospho-L-serine + 2-oxoglutarate = 3-phosphooxypyruvate + L-glutamate</text>
        <dbReference type="Rhea" id="RHEA:14329"/>
        <dbReference type="ChEBI" id="CHEBI:16810"/>
        <dbReference type="ChEBI" id="CHEBI:18110"/>
        <dbReference type="ChEBI" id="CHEBI:29985"/>
        <dbReference type="ChEBI" id="CHEBI:57524"/>
        <dbReference type="EC" id="2.6.1.52"/>
    </reaction>
</comment>
<comment type="catalytic activity">
    <reaction evidence="1">
        <text>4-(phosphooxy)-L-threonine + 2-oxoglutarate = (R)-3-hydroxy-2-oxo-4-phosphooxybutanoate + L-glutamate</text>
        <dbReference type="Rhea" id="RHEA:16573"/>
        <dbReference type="ChEBI" id="CHEBI:16810"/>
        <dbReference type="ChEBI" id="CHEBI:29985"/>
        <dbReference type="ChEBI" id="CHEBI:58452"/>
        <dbReference type="ChEBI" id="CHEBI:58538"/>
        <dbReference type="EC" id="2.6.1.52"/>
    </reaction>
</comment>
<comment type="cofactor">
    <cofactor evidence="1">
        <name>pyridoxal 5'-phosphate</name>
        <dbReference type="ChEBI" id="CHEBI:597326"/>
    </cofactor>
    <text evidence="1">Binds 1 pyridoxal phosphate per subunit.</text>
</comment>
<comment type="pathway">
    <text evidence="1">Amino-acid biosynthesis; L-serine biosynthesis; L-serine from 3-phospho-D-glycerate: step 2/3.</text>
</comment>
<comment type="pathway">
    <text evidence="1">Cofactor biosynthesis; pyridoxine 5'-phosphate biosynthesis; pyridoxine 5'-phosphate from D-erythrose 4-phosphate: step 3/5.</text>
</comment>
<comment type="subunit">
    <text evidence="1">Homodimer.</text>
</comment>
<comment type="subcellular location">
    <subcellularLocation>
        <location evidence="1">Cytoplasm</location>
    </subcellularLocation>
</comment>
<comment type="similarity">
    <text evidence="1">Belongs to the class-V pyridoxal-phosphate-dependent aminotransferase family. SerC subfamily.</text>
</comment>
<name>SERC_IDILO</name>
<proteinExistence type="inferred from homology"/>
<accession>Q5QZ48</accession>
<feature type="chain" id="PRO_0000150175" description="Phosphoserine aminotransferase">
    <location>
        <begin position="1"/>
        <end position="361"/>
    </location>
</feature>
<feature type="binding site" evidence="1">
    <location>
        <position position="42"/>
    </location>
    <ligand>
        <name>L-glutamate</name>
        <dbReference type="ChEBI" id="CHEBI:29985"/>
    </ligand>
</feature>
<feature type="binding site" evidence="1">
    <location>
        <begin position="76"/>
        <end position="77"/>
    </location>
    <ligand>
        <name>pyridoxal 5'-phosphate</name>
        <dbReference type="ChEBI" id="CHEBI:597326"/>
    </ligand>
</feature>
<feature type="binding site" evidence="1">
    <location>
        <position position="102"/>
    </location>
    <ligand>
        <name>pyridoxal 5'-phosphate</name>
        <dbReference type="ChEBI" id="CHEBI:597326"/>
    </ligand>
</feature>
<feature type="binding site" evidence="1">
    <location>
        <position position="154"/>
    </location>
    <ligand>
        <name>pyridoxal 5'-phosphate</name>
        <dbReference type="ChEBI" id="CHEBI:597326"/>
    </ligand>
</feature>
<feature type="binding site" evidence="1">
    <location>
        <position position="173"/>
    </location>
    <ligand>
        <name>pyridoxal 5'-phosphate</name>
        <dbReference type="ChEBI" id="CHEBI:597326"/>
    </ligand>
</feature>
<feature type="binding site" evidence="1">
    <location>
        <position position="196"/>
    </location>
    <ligand>
        <name>pyridoxal 5'-phosphate</name>
        <dbReference type="ChEBI" id="CHEBI:597326"/>
    </ligand>
</feature>
<feature type="binding site" evidence="1">
    <location>
        <begin position="238"/>
        <end position="239"/>
    </location>
    <ligand>
        <name>pyridoxal 5'-phosphate</name>
        <dbReference type="ChEBI" id="CHEBI:597326"/>
    </ligand>
</feature>
<feature type="modified residue" description="N6-(pyridoxal phosphate)lysine" evidence="1">
    <location>
        <position position="197"/>
    </location>
</feature>
<gene>
    <name evidence="1" type="primary">serC</name>
    <name type="ordered locus">IL1359</name>
</gene>
<dbReference type="EC" id="2.6.1.52" evidence="1"/>
<dbReference type="EMBL" id="AE017340">
    <property type="protein sequence ID" value="AAV82199.1"/>
    <property type="molecule type" value="Genomic_DNA"/>
</dbReference>
<dbReference type="RefSeq" id="WP_011234605.1">
    <property type="nucleotide sequence ID" value="NC_006512.1"/>
</dbReference>
<dbReference type="SMR" id="Q5QZ48"/>
<dbReference type="STRING" id="283942.IL1359"/>
<dbReference type="GeneID" id="41336535"/>
<dbReference type="KEGG" id="ilo:IL1359"/>
<dbReference type="eggNOG" id="COG1932">
    <property type="taxonomic scope" value="Bacteria"/>
</dbReference>
<dbReference type="HOGENOM" id="CLU_034866_0_2_6"/>
<dbReference type="OrthoDB" id="9809412at2"/>
<dbReference type="UniPathway" id="UPA00135">
    <property type="reaction ID" value="UER00197"/>
</dbReference>
<dbReference type="UniPathway" id="UPA00244">
    <property type="reaction ID" value="UER00311"/>
</dbReference>
<dbReference type="Proteomes" id="UP000001171">
    <property type="component" value="Chromosome"/>
</dbReference>
<dbReference type="GO" id="GO:0005737">
    <property type="term" value="C:cytoplasm"/>
    <property type="evidence" value="ECO:0007669"/>
    <property type="project" value="UniProtKB-SubCell"/>
</dbReference>
<dbReference type="GO" id="GO:0004648">
    <property type="term" value="F:O-phospho-L-serine:2-oxoglutarate aminotransferase activity"/>
    <property type="evidence" value="ECO:0007669"/>
    <property type="project" value="UniProtKB-UniRule"/>
</dbReference>
<dbReference type="GO" id="GO:0030170">
    <property type="term" value="F:pyridoxal phosphate binding"/>
    <property type="evidence" value="ECO:0007669"/>
    <property type="project" value="UniProtKB-UniRule"/>
</dbReference>
<dbReference type="GO" id="GO:0006564">
    <property type="term" value="P:L-serine biosynthetic process"/>
    <property type="evidence" value="ECO:0007669"/>
    <property type="project" value="UniProtKB-UniRule"/>
</dbReference>
<dbReference type="GO" id="GO:0008615">
    <property type="term" value="P:pyridoxine biosynthetic process"/>
    <property type="evidence" value="ECO:0007669"/>
    <property type="project" value="UniProtKB-UniRule"/>
</dbReference>
<dbReference type="FunFam" id="3.40.640.10:FF:000010">
    <property type="entry name" value="Phosphoserine aminotransferase"/>
    <property type="match status" value="1"/>
</dbReference>
<dbReference type="FunFam" id="3.90.1150.10:FF:000006">
    <property type="entry name" value="Phosphoserine aminotransferase"/>
    <property type="match status" value="1"/>
</dbReference>
<dbReference type="Gene3D" id="3.90.1150.10">
    <property type="entry name" value="Aspartate Aminotransferase, domain 1"/>
    <property type="match status" value="1"/>
</dbReference>
<dbReference type="Gene3D" id="3.40.640.10">
    <property type="entry name" value="Type I PLP-dependent aspartate aminotransferase-like (Major domain)"/>
    <property type="match status" value="1"/>
</dbReference>
<dbReference type="HAMAP" id="MF_00160">
    <property type="entry name" value="SerC_aminotrans_5"/>
    <property type="match status" value="1"/>
</dbReference>
<dbReference type="InterPro" id="IPR000192">
    <property type="entry name" value="Aminotrans_V_dom"/>
</dbReference>
<dbReference type="InterPro" id="IPR020578">
    <property type="entry name" value="Aminotrans_V_PyrdxlP_BS"/>
</dbReference>
<dbReference type="InterPro" id="IPR022278">
    <property type="entry name" value="Pser_aminoTfrase"/>
</dbReference>
<dbReference type="InterPro" id="IPR015424">
    <property type="entry name" value="PyrdxlP-dep_Trfase"/>
</dbReference>
<dbReference type="InterPro" id="IPR015421">
    <property type="entry name" value="PyrdxlP-dep_Trfase_major"/>
</dbReference>
<dbReference type="InterPro" id="IPR015422">
    <property type="entry name" value="PyrdxlP-dep_Trfase_small"/>
</dbReference>
<dbReference type="NCBIfam" id="NF003764">
    <property type="entry name" value="PRK05355.1"/>
    <property type="match status" value="1"/>
</dbReference>
<dbReference type="NCBIfam" id="TIGR01364">
    <property type="entry name" value="serC_1"/>
    <property type="match status" value="1"/>
</dbReference>
<dbReference type="PANTHER" id="PTHR43247">
    <property type="entry name" value="PHOSPHOSERINE AMINOTRANSFERASE"/>
    <property type="match status" value="1"/>
</dbReference>
<dbReference type="PANTHER" id="PTHR43247:SF1">
    <property type="entry name" value="PHOSPHOSERINE AMINOTRANSFERASE"/>
    <property type="match status" value="1"/>
</dbReference>
<dbReference type="Pfam" id="PF00266">
    <property type="entry name" value="Aminotran_5"/>
    <property type="match status" value="1"/>
</dbReference>
<dbReference type="PIRSF" id="PIRSF000525">
    <property type="entry name" value="SerC"/>
    <property type="match status" value="1"/>
</dbReference>
<dbReference type="SUPFAM" id="SSF53383">
    <property type="entry name" value="PLP-dependent transferases"/>
    <property type="match status" value="1"/>
</dbReference>
<dbReference type="PROSITE" id="PS00595">
    <property type="entry name" value="AA_TRANSFER_CLASS_5"/>
    <property type="match status" value="1"/>
</dbReference>